<accession>A0JY78</accession>
<feature type="chain" id="PRO_1000004858" description="Peptide chain release factor 1">
    <location>
        <begin position="1"/>
        <end position="357"/>
    </location>
</feature>
<feature type="modified residue" description="N5-methylglutamine" evidence="1">
    <location>
        <position position="234"/>
    </location>
</feature>
<comment type="function">
    <text evidence="1">Peptide chain release factor 1 directs the termination of translation in response to the peptide chain termination codons UAG and UAA.</text>
</comment>
<comment type="subcellular location">
    <subcellularLocation>
        <location evidence="1">Cytoplasm</location>
    </subcellularLocation>
</comment>
<comment type="PTM">
    <text evidence="1">Methylated by PrmC. Methylation increases the termination efficiency of RF1.</text>
</comment>
<comment type="similarity">
    <text evidence="1">Belongs to the prokaryotic/mitochondrial release factor family.</text>
</comment>
<organism>
    <name type="scientific">Arthrobacter sp. (strain FB24)</name>
    <dbReference type="NCBI Taxonomy" id="290399"/>
    <lineage>
        <taxon>Bacteria</taxon>
        <taxon>Bacillati</taxon>
        <taxon>Actinomycetota</taxon>
        <taxon>Actinomycetes</taxon>
        <taxon>Micrococcales</taxon>
        <taxon>Micrococcaceae</taxon>
        <taxon>Arthrobacter</taxon>
    </lineage>
</organism>
<name>RF1_ARTS2</name>
<evidence type="ECO:0000255" key="1">
    <source>
        <dbReference type="HAMAP-Rule" id="MF_00093"/>
    </source>
</evidence>
<dbReference type="EMBL" id="CP000454">
    <property type="protein sequence ID" value="ABK03998.1"/>
    <property type="molecule type" value="Genomic_DNA"/>
</dbReference>
<dbReference type="RefSeq" id="WP_011692460.1">
    <property type="nucleotide sequence ID" value="NC_008541.1"/>
</dbReference>
<dbReference type="SMR" id="A0JY78"/>
<dbReference type="STRING" id="290399.Arth_2619"/>
<dbReference type="KEGG" id="art:Arth_2619"/>
<dbReference type="eggNOG" id="COG0216">
    <property type="taxonomic scope" value="Bacteria"/>
</dbReference>
<dbReference type="HOGENOM" id="CLU_036856_0_1_11"/>
<dbReference type="OrthoDB" id="9806673at2"/>
<dbReference type="Proteomes" id="UP000000754">
    <property type="component" value="Chromosome"/>
</dbReference>
<dbReference type="GO" id="GO:0005737">
    <property type="term" value="C:cytoplasm"/>
    <property type="evidence" value="ECO:0007669"/>
    <property type="project" value="UniProtKB-SubCell"/>
</dbReference>
<dbReference type="GO" id="GO:0016149">
    <property type="term" value="F:translation release factor activity, codon specific"/>
    <property type="evidence" value="ECO:0007669"/>
    <property type="project" value="UniProtKB-UniRule"/>
</dbReference>
<dbReference type="FunFam" id="3.30.160.20:FF:000004">
    <property type="entry name" value="Peptide chain release factor 1"/>
    <property type="match status" value="1"/>
</dbReference>
<dbReference type="FunFam" id="3.30.70.1660:FF:000002">
    <property type="entry name" value="Peptide chain release factor 1"/>
    <property type="match status" value="1"/>
</dbReference>
<dbReference type="Gene3D" id="3.30.160.20">
    <property type="match status" value="1"/>
</dbReference>
<dbReference type="Gene3D" id="3.30.70.1660">
    <property type="match status" value="1"/>
</dbReference>
<dbReference type="Gene3D" id="6.10.140.1950">
    <property type="match status" value="1"/>
</dbReference>
<dbReference type="HAMAP" id="MF_00093">
    <property type="entry name" value="Rel_fac_1"/>
    <property type="match status" value="1"/>
</dbReference>
<dbReference type="InterPro" id="IPR005139">
    <property type="entry name" value="PCRF"/>
</dbReference>
<dbReference type="InterPro" id="IPR000352">
    <property type="entry name" value="Pep_chain_release_fac_I"/>
</dbReference>
<dbReference type="InterPro" id="IPR045853">
    <property type="entry name" value="Pep_chain_release_fac_I_sf"/>
</dbReference>
<dbReference type="InterPro" id="IPR050057">
    <property type="entry name" value="Prokaryotic/Mito_RF"/>
</dbReference>
<dbReference type="InterPro" id="IPR004373">
    <property type="entry name" value="RF-1"/>
</dbReference>
<dbReference type="NCBIfam" id="TIGR00019">
    <property type="entry name" value="prfA"/>
    <property type="match status" value="1"/>
</dbReference>
<dbReference type="NCBIfam" id="NF001859">
    <property type="entry name" value="PRK00591.1"/>
    <property type="match status" value="1"/>
</dbReference>
<dbReference type="PANTHER" id="PTHR43804">
    <property type="entry name" value="LD18447P"/>
    <property type="match status" value="1"/>
</dbReference>
<dbReference type="PANTHER" id="PTHR43804:SF7">
    <property type="entry name" value="LD18447P"/>
    <property type="match status" value="1"/>
</dbReference>
<dbReference type="Pfam" id="PF03462">
    <property type="entry name" value="PCRF"/>
    <property type="match status" value="1"/>
</dbReference>
<dbReference type="Pfam" id="PF00472">
    <property type="entry name" value="RF-1"/>
    <property type="match status" value="1"/>
</dbReference>
<dbReference type="SMART" id="SM00937">
    <property type="entry name" value="PCRF"/>
    <property type="match status" value="1"/>
</dbReference>
<dbReference type="SUPFAM" id="SSF75620">
    <property type="entry name" value="Release factor"/>
    <property type="match status" value="1"/>
</dbReference>
<dbReference type="PROSITE" id="PS00745">
    <property type="entry name" value="RF_PROK_I"/>
    <property type="match status" value="1"/>
</dbReference>
<reference key="1">
    <citation type="journal article" date="2013" name="Stand. Genomic Sci.">
        <title>Complete genome sequence of Arthrobacter sp. strain FB24.</title>
        <authorList>
            <person name="Nakatsu C.H."/>
            <person name="Barabote R."/>
            <person name="Thompson S."/>
            <person name="Bruce D."/>
            <person name="Detter C."/>
            <person name="Brettin T."/>
            <person name="Han C."/>
            <person name="Beasley F."/>
            <person name="Chen W."/>
            <person name="Konopka A."/>
            <person name="Xie G."/>
        </authorList>
    </citation>
    <scope>NUCLEOTIDE SEQUENCE [LARGE SCALE GENOMIC DNA]</scope>
    <source>
        <strain>FB24</strain>
    </source>
</reference>
<protein>
    <recommendedName>
        <fullName evidence="1">Peptide chain release factor 1</fullName>
        <shortName evidence="1">RF-1</shortName>
    </recommendedName>
</protein>
<sequence length="357" mass="39619">MFESVQGLLDEHAAIQAQLGDPAVYADQKLARKLGRRSAQLNGIVEAYHRWESIRDDLAAAKEMADEDPEFAAEVPELEASLETAAAKLRRLLIPRDPDDARNVILEVKGGEGGDEAALFAADLLRMYSRYAESRGWKTELISATESDLGGYKDVQMAVKGNSNDPAEGVYARLKFEGGVHRVQRVPVTESQGRIHTSAAGVLVLPEVDEPEELEINQNDLKIDVYRSSGPGGQSVNTTDSAVRITHLPTGIVVAMQNEKSQLQNREAGMRVLRARILAHQQEQIDAENSAQRKSQIRTMDRSERIRTYNYPENRIADHRTGYKAYNLDQVMNGDLEPVIQSAIEMDEQARLDAIGE</sequence>
<proteinExistence type="inferred from homology"/>
<keyword id="KW-0963">Cytoplasm</keyword>
<keyword id="KW-0488">Methylation</keyword>
<keyword id="KW-0648">Protein biosynthesis</keyword>
<keyword id="KW-1185">Reference proteome</keyword>
<gene>
    <name evidence="1" type="primary">prfA</name>
    <name type="ordered locus">Arth_2619</name>
</gene>